<gene>
    <name evidence="1" type="primary">dusC</name>
    <name type="ordered locus">PP_1981</name>
</gene>
<name>DUSC_PSEPK</name>
<comment type="function">
    <text evidence="1">Catalyzes the synthesis of 5,6-dihydrouridine (D), a modified base found in the D-loop of most tRNAs, via the reduction of the C5-C6 double bond in target uridines. Specifically modifies U16 in tRNAs.</text>
</comment>
<comment type="catalytic activity">
    <reaction evidence="1">
        <text>5,6-dihydrouridine(16) in tRNA + NADP(+) = uridine(16) in tRNA + NADPH + H(+)</text>
        <dbReference type="Rhea" id="RHEA:53376"/>
        <dbReference type="Rhea" id="RHEA-COMP:13543"/>
        <dbReference type="Rhea" id="RHEA-COMP:13544"/>
        <dbReference type="ChEBI" id="CHEBI:15378"/>
        <dbReference type="ChEBI" id="CHEBI:57783"/>
        <dbReference type="ChEBI" id="CHEBI:58349"/>
        <dbReference type="ChEBI" id="CHEBI:65315"/>
        <dbReference type="ChEBI" id="CHEBI:74443"/>
    </reaction>
</comment>
<comment type="catalytic activity">
    <reaction evidence="1">
        <text>5,6-dihydrouridine(16) in tRNA + NAD(+) = uridine(16) in tRNA + NADH + H(+)</text>
        <dbReference type="Rhea" id="RHEA:53380"/>
        <dbReference type="Rhea" id="RHEA-COMP:13543"/>
        <dbReference type="Rhea" id="RHEA-COMP:13544"/>
        <dbReference type="ChEBI" id="CHEBI:15378"/>
        <dbReference type="ChEBI" id="CHEBI:57540"/>
        <dbReference type="ChEBI" id="CHEBI:57945"/>
        <dbReference type="ChEBI" id="CHEBI:65315"/>
        <dbReference type="ChEBI" id="CHEBI:74443"/>
    </reaction>
</comment>
<comment type="cofactor">
    <cofactor evidence="1">
        <name>FMN</name>
        <dbReference type="ChEBI" id="CHEBI:58210"/>
    </cofactor>
</comment>
<comment type="similarity">
    <text evidence="1">Belongs to the Dus family. DusC subfamily.</text>
</comment>
<evidence type="ECO:0000255" key="1">
    <source>
        <dbReference type="HAMAP-Rule" id="MF_02043"/>
    </source>
</evidence>
<protein>
    <recommendedName>
        <fullName evidence="1">tRNA-dihydrouridine(16) synthase</fullName>
        <ecNumber evidence="1">1.3.1.-</ecNumber>
    </recommendedName>
    <alternativeName>
        <fullName evidence="1">U16-specific dihydrouridine synthase</fullName>
        <shortName evidence="1">U16-specific Dus</shortName>
    </alternativeName>
    <alternativeName>
        <fullName evidence="1">tRNA-dihydrouridine synthase C</fullName>
    </alternativeName>
</protein>
<accession>Q88LF2</accession>
<dbReference type="EC" id="1.3.1.-" evidence="1"/>
<dbReference type="EMBL" id="AE015451">
    <property type="protein sequence ID" value="AAN67596.1"/>
    <property type="molecule type" value="Genomic_DNA"/>
</dbReference>
<dbReference type="RefSeq" id="NP_744132.1">
    <property type="nucleotide sequence ID" value="NC_002947.4"/>
</dbReference>
<dbReference type="RefSeq" id="WP_010952998.1">
    <property type="nucleotide sequence ID" value="NZ_CP169744.1"/>
</dbReference>
<dbReference type="SMR" id="Q88LF2"/>
<dbReference type="STRING" id="160488.PP_1981"/>
<dbReference type="PaxDb" id="160488-PP_1981"/>
<dbReference type="KEGG" id="ppu:PP_1981"/>
<dbReference type="PATRIC" id="fig|160488.4.peg.2089"/>
<dbReference type="eggNOG" id="COG0042">
    <property type="taxonomic scope" value="Bacteria"/>
</dbReference>
<dbReference type="HOGENOM" id="CLU_013299_0_4_6"/>
<dbReference type="OrthoDB" id="5289281at2"/>
<dbReference type="PhylomeDB" id="Q88LF2"/>
<dbReference type="BioCyc" id="PPUT160488:G1G01-2112-MONOMER"/>
<dbReference type="Proteomes" id="UP000000556">
    <property type="component" value="Chromosome"/>
</dbReference>
<dbReference type="GO" id="GO:0050660">
    <property type="term" value="F:flavin adenine dinucleotide binding"/>
    <property type="evidence" value="ECO:0007669"/>
    <property type="project" value="InterPro"/>
</dbReference>
<dbReference type="GO" id="GO:0010181">
    <property type="term" value="F:FMN binding"/>
    <property type="evidence" value="ECO:0007669"/>
    <property type="project" value="UniProtKB-UniRule"/>
</dbReference>
<dbReference type="GO" id="GO:0000049">
    <property type="term" value="F:tRNA binding"/>
    <property type="evidence" value="ECO:0007669"/>
    <property type="project" value="UniProtKB-UniRule"/>
</dbReference>
<dbReference type="GO" id="GO:0102262">
    <property type="term" value="F:tRNA-dihydrouridine16 synthase activity"/>
    <property type="evidence" value="ECO:0007669"/>
    <property type="project" value="RHEA"/>
</dbReference>
<dbReference type="CDD" id="cd02801">
    <property type="entry name" value="DUS_like_FMN"/>
    <property type="match status" value="1"/>
</dbReference>
<dbReference type="Gene3D" id="3.20.20.70">
    <property type="entry name" value="Aldolase class I"/>
    <property type="match status" value="1"/>
</dbReference>
<dbReference type="Gene3D" id="1.20.225.30">
    <property type="entry name" value="Dihydrouridine synthase, C-terminal recognition domain"/>
    <property type="match status" value="1"/>
</dbReference>
<dbReference type="HAMAP" id="MF_02043">
    <property type="entry name" value="DusC_subfam"/>
    <property type="match status" value="1"/>
</dbReference>
<dbReference type="InterPro" id="IPR013785">
    <property type="entry name" value="Aldolase_TIM"/>
</dbReference>
<dbReference type="InterPro" id="IPR035587">
    <property type="entry name" value="DUS-like_FMN-bd"/>
</dbReference>
<dbReference type="InterPro" id="IPR001269">
    <property type="entry name" value="DUS_fam"/>
</dbReference>
<dbReference type="InterPro" id="IPR032886">
    <property type="entry name" value="DusC"/>
</dbReference>
<dbReference type="InterPro" id="IPR042270">
    <property type="entry name" value="DusC_C"/>
</dbReference>
<dbReference type="InterPro" id="IPR018517">
    <property type="entry name" value="tRNA_hU_synthase_CS"/>
</dbReference>
<dbReference type="PANTHER" id="PTHR11082">
    <property type="entry name" value="TRNA-DIHYDROURIDINE SYNTHASE"/>
    <property type="match status" value="1"/>
</dbReference>
<dbReference type="PANTHER" id="PTHR11082:SF26">
    <property type="entry name" value="TRNA-DIHYDROURIDINE(16) SYNTHASE"/>
    <property type="match status" value="1"/>
</dbReference>
<dbReference type="Pfam" id="PF01207">
    <property type="entry name" value="Dus"/>
    <property type="match status" value="1"/>
</dbReference>
<dbReference type="PIRSF" id="PIRSF006621">
    <property type="entry name" value="Dus"/>
    <property type="match status" value="1"/>
</dbReference>
<dbReference type="SUPFAM" id="SSF51395">
    <property type="entry name" value="FMN-linked oxidoreductases"/>
    <property type="match status" value="1"/>
</dbReference>
<dbReference type="PROSITE" id="PS01136">
    <property type="entry name" value="UPF0034"/>
    <property type="match status" value="1"/>
</dbReference>
<sequence>MQIALAPMEGLVDNILRDVLTRVGGIDWCVTEFIRVCDRLLPASSFDKLAPELRQGARTAAGVPMRVQLLGSDPVCLAENAALACELGAPVIDLNFGCPAKTVNKSRGGAVLLKEPELLHAIVREVRRAVPANIPVTSKMRLGFDSPDGALECATALAEGGSAHLVVHARTKVEGYKPPAHWEWVARVQDVVKVPVFANGEIWTVDDWRRCREVSGAEDIMLGRGLVSRPDLGLQIAAARDGRDYQPMSWHDLLPLLREFWRQAQAKLSPRYAPGRMKQWLAMLTRSYPEAVVLFAELRREDDCARISRLLGVEAQVLEACVA</sequence>
<reference key="1">
    <citation type="journal article" date="2002" name="Environ. Microbiol.">
        <title>Complete genome sequence and comparative analysis of the metabolically versatile Pseudomonas putida KT2440.</title>
        <authorList>
            <person name="Nelson K.E."/>
            <person name="Weinel C."/>
            <person name="Paulsen I.T."/>
            <person name="Dodson R.J."/>
            <person name="Hilbert H."/>
            <person name="Martins dos Santos V.A.P."/>
            <person name="Fouts D.E."/>
            <person name="Gill S.R."/>
            <person name="Pop M."/>
            <person name="Holmes M."/>
            <person name="Brinkac L.M."/>
            <person name="Beanan M.J."/>
            <person name="DeBoy R.T."/>
            <person name="Daugherty S.C."/>
            <person name="Kolonay J.F."/>
            <person name="Madupu R."/>
            <person name="Nelson W.C."/>
            <person name="White O."/>
            <person name="Peterson J.D."/>
            <person name="Khouri H.M."/>
            <person name="Hance I."/>
            <person name="Chris Lee P."/>
            <person name="Holtzapple E.K."/>
            <person name="Scanlan D."/>
            <person name="Tran K."/>
            <person name="Moazzez A."/>
            <person name="Utterback T.R."/>
            <person name="Rizzo M."/>
            <person name="Lee K."/>
            <person name="Kosack D."/>
            <person name="Moestl D."/>
            <person name="Wedler H."/>
            <person name="Lauber J."/>
            <person name="Stjepandic D."/>
            <person name="Hoheisel J."/>
            <person name="Straetz M."/>
            <person name="Heim S."/>
            <person name="Kiewitz C."/>
            <person name="Eisen J.A."/>
            <person name="Timmis K.N."/>
            <person name="Duesterhoeft A."/>
            <person name="Tuemmler B."/>
            <person name="Fraser C.M."/>
        </authorList>
    </citation>
    <scope>NUCLEOTIDE SEQUENCE [LARGE SCALE GENOMIC DNA]</scope>
    <source>
        <strain>ATCC 47054 / DSM 6125 / CFBP 8728 / NCIMB 11950 / KT2440</strain>
    </source>
</reference>
<organism>
    <name type="scientific">Pseudomonas putida (strain ATCC 47054 / DSM 6125 / CFBP 8728 / NCIMB 11950 / KT2440)</name>
    <dbReference type="NCBI Taxonomy" id="160488"/>
    <lineage>
        <taxon>Bacteria</taxon>
        <taxon>Pseudomonadati</taxon>
        <taxon>Pseudomonadota</taxon>
        <taxon>Gammaproteobacteria</taxon>
        <taxon>Pseudomonadales</taxon>
        <taxon>Pseudomonadaceae</taxon>
        <taxon>Pseudomonas</taxon>
    </lineage>
</organism>
<keyword id="KW-0285">Flavoprotein</keyword>
<keyword id="KW-0288">FMN</keyword>
<keyword id="KW-0521">NADP</keyword>
<keyword id="KW-0560">Oxidoreductase</keyword>
<keyword id="KW-1185">Reference proteome</keyword>
<keyword id="KW-0694">RNA-binding</keyword>
<keyword id="KW-0819">tRNA processing</keyword>
<keyword id="KW-0820">tRNA-binding</keyword>
<proteinExistence type="inferred from homology"/>
<feature type="chain" id="PRO_0000162119" description="tRNA-dihydrouridine(16) synthase">
    <location>
        <begin position="1"/>
        <end position="323"/>
    </location>
</feature>
<feature type="active site" description="Proton donor" evidence="1">
    <location>
        <position position="98"/>
    </location>
</feature>
<feature type="binding site" evidence="1">
    <location>
        <begin position="7"/>
        <end position="9"/>
    </location>
    <ligand>
        <name>FMN</name>
        <dbReference type="ChEBI" id="CHEBI:58210"/>
    </ligand>
</feature>
<feature type="binding site" evidence="1">
    <location>
        <position position="68"/>
    </location>
    <ligand>
        <name>FMN</name>
        <dbReference type="ChEBI" id="CHEBI:58210"/>
    </ligand>
</feature>
<feature type="binding site" evidence="1">
    <location>
        <position position="139"/>
    </location>
    <ligand>
        <name>FMN</name>
        <dbReference type="ChEBI" id="CHEBI:58210"/>
    </ligand>
</feature>
<feature type="binding site" evidence="1">
    <location>
        <begin position="199"/>
        <end position="201"/>
    </location>
    <ligand>
        <name>FMN</name>
        <dbReference type="ChEBI" id="CHEBI:58210"/>
    </ligand>
</feature>
<feature type="binding site" evidence="1">
    <location>
        <begin position="223"/>
        <end position="224"/>
    </location>
    <ligand>
        <name>FMN</name>
        <dbReference type="ChEBI" id="CHEBI:58210"/>
    </ligand>
</feature>
<feature type="site" description="Interacts with tRNA; defines subfamily-specific binding signature" evidence="1">
    <location>
        <position position="35"/>
    </location>
</feature>
<feature type="site" description="Interacts with tRNA" evidence="1">
    <location>
        <position position="95"/>
    </location>
</feature>
<feature type="site" description="Interacts with tRNA" evidence="1">
    <location>
        <position position="176"/>
    </location>
</feature>
<feature type="site" description="Interacts with tRNA; defines subfamily-specific binding signature" evidence="1">
    <location>
        <position position="276"/>
    </location>
</feature>
<feature type="site" description="Interacts with tRNA; defines subfamily-specific binding signature" evidence="1">
    <location>
        <position position="278"/>
    </location>
</feature>
<feature type="site" description="Interacts with tRNA; defines subfamily-specific binding signature" evidence="1">
    <location>
        <position position="299"/>
    </location>
</feature>